<organism>
    <name type="scientific">Mycolicibacterium smegmatis (strain ATCC 700084 / mc(2)155)</name>
    <name type="common">Mycobacterium smegmatis</name>
    <dbReference type="NCBI Taxonomy" id="246196"/>
    <lineage>
        <taxon>Bacteria</taxon>
        <taxon>Bacillati</taxon>
        <taxon>Actinomycetota</taxon>
        <taxon>Actinomycetes</taxon>
        <taxon>Mycobacteriales</taxon>
        <taxon>Mycobacteriaceae</taxon>
        <taxon>Mycolicibacterium</taxon>
    </lineage>
</organism>
<name>BTB7_MYCS2</name>
<evidence type="ECO:0000250" key="1"/>
<evidence type="ECO:0000255" key="2">
    <source>
        <dbReference type="PROSITE-ProRule" id="PRU01066"/>
    </source>
</evidence>
<evidence type="ECO:0000305" key="3"/>
<feature type="initiator methionine" description="Removed" evidence="1">
    <location>
        <position position="1"/>
    </location>
</feature>
<feature type="chain" id="PRO_0000146837" description="Biotinylated protein TB7.3 homolog">
    <location>
        <begin position="2"/>
        <end position="71"/>
    </location>
</feature>
<feature type="domain" description="Biotinyl-binding" evidence="2">
    <location>
        <begin position="2"/>
        <end position="71"/>
    </location>
</feature>
<feature type="modified residue" description="N6-biotinyllysine" evidence="1 2">
    <location>
        <position position="37"/>
    </location>
</feature>
<protein>
    <recommendedName>
        <fullName>Biotinylated protein TB7.3 homolog</fullName>
    </recommendedName>
</protein>
<sequence length="71" mass="7438">MAEDVRAEIVASVLEVVVHEGDQIGEGDTLVLLESMKMEIPVLAEVAGTVTKVNVAEGDVIQAGHLIAVID</sequence>
<keyword id="KW-0092">Biotin</keyword>
<keyword id="KW-1185">Reference proteome</keyword>
<accession>Q9XCD6</accession>
<accession>A0QTP5</accession>
<accession>I7FHR8</accession>
<gene>
    <name type="ordered locus">MSMEG_1917</name>
    <name type="ordered locus">MSMEI_1876</name>
</gene>
<dbReference type="EMBL" id="AF144091">
    <property type="protein sequence ID" value="AAD41812.1"/>
    <property type="molecule type" value="Genomic_DNA"/>
</dbReference>
<dbReference type="EMBL" id="CP000480">
    <property type="protein sequence ID" value="ABK75917.1"/>
    <property type="status" value="ALT_INIT"/>
    <property type="molecule type" value="Genomic_DNA"/>
</dbReference>
<dbReference type="EMBL" id="CP001663">
    <property type="protein sequence ID" value="AFP38348.1"/>
    <property type="molecule type" value="Genomic_DNA"/>
</dbReference>
<dbReference type="RefSeq" id="WP_014877243.1">
    <property type="nucleotide sequence ID" value="NZ_SIJM01000020.1"/>
</dbReference>
<dbReference type="RefSeq" id="YP_886283.1">
    <property type="nucleotide sequence ID" value="NC_008596.1"/>
</dbReference>
<dbReference type="SMR" id="Q9XCD6"/>
<dbReference type="STRING" id="246196.MSMEG_1917"/>
<dbReference type="PaxDb" id="246196-MSMEI_1876"/>
<dbReference type="KEGG" id="msb:LJ00_09570"/>
<dbReference type="KEGG" id="msg:MSMEI_1876"/>
<dbReference type="KEGG" id="msm:MSMEG_1917"/>
<dbReference type="PATRIC" id="fig|246196.19.peg.1898"/>
<dbReference type="eggNOG" id="COG1038">
    <property type="taxonomic scope" value="Bacteria"/>
</dbReference>
<dbReference type="OrthoDB" id="163546at2"/>
<dbReference type="Proteomes" id="UP000000757">
    <property type="component" value="Chromosome"/>
</dbReference>
<dbReference type="Proteomes" id="UP000006158">
    <property type="component" value="Chromosome"/>
</dbReference>
<dbReference type="CDD" id="cd06850">
    <property type="entry name" value="biotinyl_domain"/>
    <property type="match status" value="1"/>
</dbReference>
<dbReference type="Gene3D" id="2.40.50.100">
    <property type="match status" value="1"/>
</dbReference>
<dbReference type="InterPro" id="IPR050709">
    <property type="entry name" value="Biotin_Carboxyl_Carrier/Decarb"/>
</dbReference>
<dbReference type="InterPro" id="IPR000089">
    <property type="entry name" value="Biotin_lipoyl"/>
</dbReference>
<dbReference type="InterPro" id="IPR011053">
    <property type="entry name" value="Single_hybrid_motif"/>
</dbReference>
<dbReference type="NCBIfam" id="NF004547">
    <property type="entry name" value="PRK05889.1"/>
    <property type="match status" value="1"/>
</dbReference>
<dbReference type="PANTHER" id="PTHR45266">
    <property type="entry name" value="OXALOACETATE DECARBOXYLASE ALPHA CHAIN"/>
    <property type="match status" value="1"/>
</dbReference>
<dbReference type="PANTHER" id="PTHR45266:SF3">
    <property type="entry name" value="OXALOACETATE DECARBOXYLASE ALPHA CHAIN"/>
    <property type="match status" value="1"/>
</dbReference>
<dbReference type="Pfam" id="PF00364">
    <property type="entry name" value="Biotin_lipoyl"/>
    <property type="match status" value="1"/>
</dbReference>
<dbReference type="SUPFAM" id="SSF51230">
    <property type="entry name" value="Single hybrid motif"/>
    <property type="match status" value="1"/>
</dbReference>
<dbReference type="PROSITE" id="PS50968">
    <property type="entry name" value="BIOTINYL_LIPOYL"/>
    <property type="match status" value="1"/>
</dbReference>
<proteinExistence type="inferred from homology"/>
<comment type="sequence caution" evidence="3">
    <conflict type="erroneous initiation">
        <sequence resource="EMBL-CDS" id="ABK75917"/>
    </conflict>
</comment>
<reference key="1">
    <citation type="journal article" date="1999" name="J. Bacteriol.">
        <title>A mycobacterial extracytoplasmic sigma factor involved in survival following heat shock and oxidative stress.</title>
        <authorList>
            <person name="Fernandes N.D."/>
            <person name="Wu Q.-L."/>
            <person name="Kong D."/>
            <person name="Puyang X."/>
            <person name="Garg S."/>
            <person name="Husson R.N."/>
        </authorList>
    </citation>
    <scope>NUCLEOTIDE SEQUENCE [GENOMIC DNA]</scope>
</reference>
<reference key="2">
    <citation type="submission" date="2006-10" db="EMBL/GenBank/DDBJ databases">
        <authorList>
            <person name="Fleischmann R.D."/>
            <person name="Dodson R.J."/>
            <person name="Haft D.H."/>
            <person name="Merkel J.S."/>
            <person name="Nelson W.C."/>
            <person name="Fraser C.M."/>
        </authorList>
    </citation>
    <scope>NUCLEOTIDE SEQUENCE [LARGE SCALE GENOMIC DNA]</scope>
    <source>
        <strain>ATCC 700084 / mc(2)155</strain>
    </source>
</reference>
<reference key="3">
    <citation type="journal article" date="2007" name="Genome Biol.">
        <title>Interrupted coding sequences in Mycobacterium smegmatis: authentic mutations or sequencing errors?</title>
        <authorList>
            <person name="Deshayes C."/>
            <person name="Perrodou E."/>
            <person name="Gallien S."/>
            <person name="Euphrasie D."/>
            <person name="Schaeffer C."/>
            <person name="Van-Dorsselaer A."/>
            <person name="Poch O."/>
            <person name="Lecompte O."/>
            <person name="Reyrat J.-M."/>
        </authorList>
    </citation>
    <scope>NUCLEOTIDE SEQUENCE [LARGE SCALE GENOMIC DNA]</scope>
    <source>
        <strain>ATCC 700084 / mc(2)155</strain>
    </source>
</reference>
<reference key="4">
    <citation type="journal article" date="2009" name="Genome Res.">
        <title>Ortho-proteogenomics: multiple proteomes investigation through orthology and a new MS-based protocol.</title>
        <authorList>
            <person name="Gallien S."/>
            <person name="Perrodou E."/>
            <person name="Carapito C."/>
            <person name="Deshayes C."/>
            <person name="Reyrat J.-M."/>
            <person name="Van Dorsselaer A."/>
            <person name="Poch O."/>
            <person name="Schaeffer C."/>
            <person name="Lecompte O."/>
        </authorList>
    </citation>
    <scope>NUCLEOTIDE SEQUENCE [LARGE SCALE GENOMIC DNA]</scope>
    <source>
        <strain>ATCC 700084 / mc(2)155</strain>
    </source>
</reference>